<keyword id="KW-0002">3D-structure</keyword>
<keyword id="KW-0007">Acetylation</keyword>
<keyword id="KW-0238">DNA-binding</keyword>
<keyword id="KW-0539">Nucleus</keyword>
<keyword id="KW-0597">Phosphoprotein</keyword>
<keyword id="KW-1267">Proteomics identification</keyword>
<keyword id="KW-1185">Reference proteome</keyword>
<keyword id="KW-0804">Transcription</keyword>
<comment type="function">
    <text evidence="2">Involved in RNA polymerase III-mediated transcription. Integral, tightly associated component of the DNA-binding TFIIIC2 subcomplex that directly binds tRNA and virus-associated RNA promoters.</text>
</comment>
<comment type="subunit">
    <text evidence="2">Part of the TFIIIC subcomplex TFIIIC2, consisting of six subunits, GTF3C1, GTF3C2, GTF3C3, GTF3C4, GTF3C5 and GTF3C6. Interacts with GTF3C4 and GTF3C5.</text>
</comment>
<comment type="interaction">
    <interactant intactId="EBI-6268616">
        <id>Q969F1</id>
    </interactant>
    <interactant intactId="EBI-1237240">
        <id>Q9UKN8</id>
        <label>GTF3C4</label>
    </interactant>
    <organismsDiffer>false</organismsDiffer>
    <experiments>2</experiments>
</comment>
<comment type="interaction">
    <interactant intactId="EBI-6268616">
        <id>Q969F1</id>
    </interactant>
    <interactant intactId="EBI-1045409">
        <id>Q9Y5Q8</id>
        <label>GTF3C5</label>
    </interactant>
    <organismsDiffer>false</organismsDiffer>
    <experiments>2</experiments>
</comment>
<comment type="interaction">
    <interactant intactId="EBI-6268616">
        <id>Q969F1</id>
    </interactant>
    <interactant intactId="EBI-11995806">
        <id>Q9H0A9-2</id>
        <label>SPATC1L</label>
    </interactant>
    <organismsDiffer>false</organismsDiffer>
    <experiments>3</experiments>
</comment>
<comment type="subcellular location">
    <subcellularLocation>
        <location evidence="2">Nucleus</location>
    </subcellularLocation>
</comment>
<comment type="similarity">
    <text evidence="3">Belongs to the TFIIIC subunit 6 family.</text>
</comment>
<sequence>MAAAADERSPEDGEDEEEEEQLVLVELSGIIDSDFLSKCENKCKVLGIDTERPILQVDSCVFAGEYEDTLGTCVIFEENVEHADTEGNNKTVLKYKCHTMKKLSMTRTLLTEKKEGEENIGGVEWLQIKDNDFSYRPNMICNFLHENEDEEVVASAPDKSLELEEEEIQMNDSSNLSCEQEKPMHLEIEDSGPLIDIPSETEGSVFMETQMLP</sequence>
<gene>
    <name type="primary">GTF3C6</name>
    <name type="synonym">C6orf51</name>
    <name type="ORF">CDA020</name>
    <name type="ORF">NPD020</name>
</gene>
<proteinExistence type="evidence at protein level"/>
<organism>
    <name type="scientific">Homo sapiens</name>
    <name type="common">Human</name>
    <dbReference type="NCBI Taxonomy" id="9606"/>
    <lineage>
        <taxon>Eukaryota</taxon>
        <taxon>Metazoa</taxon>
        <taxon>Chordata</taxon>
        <taxon>Craniata</taxon>
        <taxon>Vertebrata</taxon>
        <taxon>Euteleostomi</taxon>
        <taxon>Mammalia</taxon>
        <taxon>Eutheria</taxon>
        <taxon>Euarchontoglires</taxon>
        <taxon>Primates</taxon>
        <taxon>Haplorrhini</taxon>
        <taxon>Catarrhini</taxon>
        <taxon>Hominidae</taxon>
        <taxon>Homo</taxon>
    </lineage>
</organism>
<protein>
    <recommendedName>
        <fullName>General transcription factor 3C polypeptide 6</fullName>
    </recommendedName>
    <alternativeName>
        <fullName>Transcription factor IIIC 35 kDa subunit</fullName>
        <shortName>TFIIIC 35 kDa subunit</shortName>
        <shortName>TFIIIC35</shortName>
    </alternativeName>
    <alternativeName>
        <fullName>Transcription factor IIIC subunit 6</fullName>
    </alternativeName>
</protein>
<feature type="initiator methionine" description="Removed" evidence="4">
    <location>
        <position position="1"/>
    </location>
</feature>
<feature type="chain" id="PRO_0000089507" description="General transcription factor 3C polypeptide 6">
    <location>
        <begin position="2"/>
        <end position="213"/>
    </location>
</feature>
<feature type="region of interest" description="Disordered" evidence="1">
    <location>
        <begin position="1"/>
        <end position="20"/>
    </location>
</feature>
<feature type="region of interest" description="Disordered" evidence="1">
    <location>
        <begin position="191"/>
        <end position="213"/>
    </location>
</feature>
<feature type="compositionally biased region" description="Basic and acidic residues" evidence="1">
    <location>
        <begin position="1"/>
        <end position="11"/>
    </location>
</feature>
<feature type="modified residue" description="N-acetylalanine" evidence="4">
    <location>
        <position position="2"/>
    </location>
</feature>
<feature type="modified residue" description="Phosphoserine" evidence="4">
    <location>
        <position position="9"/>
    </location>
</feature>
<reference key="1">
    <citation type="journal article" date="2007" name="J. Biol. Chem.">
        <title>Identification, molecular cloning, and characterization of the sixth subunit of human transcription factor TFIIIC.</title>
        <authorList>
            <person name="Dumay-Odelot H."/>
            <person name="Marck C."/>
            <person name="Durrieu-Gaillard S."/>
            <person name="Lefebvre O."/>
            <person name="Jourdain S."/>
            <person name="Prochazkova M."/>
            <person name="Pflieger A."/>
            <person name="Teichmann M."/>
        </authorList>
    </citation>
    <scope>NUCLEOTIDE SEQUENCE [MRNA]</scope>
    <scope>FUNCTION</scope>
    <scope>IDENTIFICATION IN TFIIIC2 COMPLEX</scope>
    <scope>INTERACTION WITH GTF3C4 AND GTF3C5</scope>
    <scope>SUBCELLULAR LOCATION</scope>
</reference>
<reference key="2">
    <citation type="submission" date="2001-03" db="EMBL/GenBank/DDBJ databases">
        <authorList>
            <person name="Liu F."/>
            <person name="Xu X.R."/>
            <person name="Qian B.Z."/>
            <person name="Xiao H."/>
            <person name="Chen Z."/>
            <person name="Han Z."/>
        </authorList>
    </citation>
    <scope>NUCLEOTIDE SEQUENCE [LARGE SCALE MRNA]</scope>
    <source>
        <tissue>Pheochromocytoma</tissue>
        <tissue>Pituitary</tissue>
    </source>
</reference>
<reference key="3">
    <citation type="journal article" date="2004" name="Nat. Genet.">
        <title>Complete sequencing and characterization of 21,243 full-length human cDNAs.</title>
        <authorList>
            <person name="Ota T."/>
            <person name="Suzuki Y."/>
            <person name="Nishikawa T."/>
            <person name="Otsuki T."/>
            <person name="Sugiyama T."/>
            <person name="Irie R."/>
            <person name="Wakamatsu A."/>
            <person name="Hayashi K."/>
            <person name="Sato H."/>
            <person name="Nagai K."/>
            <person name="Kimura K."/>
            <person name="Makita H."/>
            <person name="Sekine M."/>
            <person name="Obayashi M."/>
            <person name="Nishi T."/>
            <person name="Shibahara T."/>
            <person name="Tanaka T."/>
            <person name="Ishii S."/>
            <person name="Yamamoto J."/>
            <person name="Saito K."/>
            <person name="Kawai Y."/>
            <person name="Isono Y."/>
            <person name="Nakamura Y."/>
            <person name="Nagahari K."/>
            <person name="Murakami K."/>
            <person name="Yasuda T."/>
            <person name="Iwayanagi T."/>
            <person name="Wagatsuma M."/>
            <person name="Shiratori A."/>
            <person name="Sudo H."/>
            <person name="Hosoiri T."/>
            <person name="Kaku Y."/>
            <person name="Kodaira H."/>
            <person name="Kondo H."/>
            <person name="Sugawara M."/>
            <person name="Takahashi M."/>
            <person name="Kanda K."/>
            <person name="Yokoi T."/>
            <person name="Furuya T."/>
            <person name="Kikkawa E."/>
            <person name="Omura Y."/>
            <person name="Abe K."/>
            <person name="Kamihara K."/>
            <person name="Katsuta N."/>
            <person name="Sato K."/>
            <person name="Tanikawa M."/>
            <person name="Yamazaki M."/>
            <person name="Ninomiya K."/>
            <person name="Ishibashi T."/>
            <person name="Yamashita H."/>
            <person name="Murakawa K."/>
            <person name="Fujimori K."/>
            <person name="Tanai H."/>
            <person name="Kimata M."/>
            <person name="Watanabe M."/>
            <person name="Hiraoka S."/>
            <person name="Chiba Y."/>
            <person name="Ishida S."/>
            <person name="Ono Y."/>
            <person name="Takiguchi S."/>
            <person name="Watanabe S."/>
            <person name="Yosida M."/>
            <person name="Hotuta T."/>
            <person name="Kusano J."/>
            <person name="Kanehori K."/>
            <person name="Takahashi-Fujii A."/>
            <person name="Hara H."/>
            <person name="Tanase T.-O."/>
            <person name="Nomura Y."/>
            <person name="Togiya S."/>
            <person name="Komai F."/>
            <person name="Hara R."/>
            <person name="Takeuchi K."/>
            <person name="Arita M."/>
            <person name="Imose N."/>
            <person name="Musashino K."/>
            <person name="Yuuki H."/>
            <person name="Oshima A."/>
            <person name="Sasaki N."/>
            <person name="Aotsuka S."/>
            <person name="Yoshikawa Y."/>
            <person name="Matsunawa H."/>
            <person name="Ichihara T."/>
            <person name="Shiohata N."/>
            <person name="Sano S."/>
            <person name="Moriya S."/>
            <person name="Momiyama H."/>
            <person name="Satoh N."/>
            <person name="Takami S."/>
            <person name="Terashima Y."/>
            <person name="Suzuki O."/>
            <person name="Nakagawa S."/>
            <person name="Senoh A."/>
            <person name="Mizoguchi H."/>
            <person name="Goto Y."/>
            <person name="Shimizu F."/>
            <person name="Wakebe H."/>
            <person name="Hishigaki H."/>
            <person name="Watanabe T."/>
            <person name="Sugiyama A."/>
            <person name="Takemoto M."/>
            <person name="Kawakami B."/>
            <person name="Yamazaki M."/>
            <person name="Watanabe K."/>
            <person name="Kumagai A."/>
            <person name="Itakura S."/>
            <person name="Fukuzumi Y."/>
            <person name="Fujimori Y."/>
            <person name="Komiyama M."/>
            <person name="Tashiro H."/>
            <person name="Tanigami A."/>
            <person name="Fujiwara T."/>
            <person name="Ono T."/>
            <person name="Yamada K."/>
            <person name="Fujii Y."/>
            <person name="Ozaki K."/>
            <person name="Hirao M."/>
            <person name="Ohmori Y."/>
            <person name="Kawabata A."/>
            <person name="Hikiji T."/>
            <person name="Kobatake N."/>
            <person name="Inagaki H."/>
            <person name="Ikema Y."/>
            <person name="Okamoto S."/>
            <person name="Okitani R."/>
            <person name="Kawakami T."/>
            <person name="Noguchi S."/>
            <person name="Itoh T."/>
            <person name="Shigeta K."/>
            <person name="Senba T."/>
            <person name="Matsumura K."/>
            <person name="Nakajima Y."/>
            <person name="Mizuno T."/>
            <person name="Morinaga M."/>
            <person name="Sasaki M."/>
            <person name="Togashi T."/>
            <person name="Oyama M."/>
            <person name="Hata H."/>
            <person name="Watanabe M."/>
            <person name="Komatsu T."/>
            <person name="Mizushima-Sugano J."/>
            <person name="Satoh T."/>
            <person name="Shirai Y."/>
            <person name="Takahashi Y."/>
            <person name="Nakagawa K."/>
            <person name="Okumura K."/>
            <person name="Nagase T."/>
            <person name="Nomura N."/>
            <person name="Kikuchi H."/>
            <person name="Masuho Y."/>
            <person name="Yamashita R."/>
            <person name="Nakai K."/>
            <person name="Yada T."/>
            <person name="Nakamura Y."/>
            <person name="Ohara O."/>
            <person name="Isogai T."/>
            <person name="Sugano S."/>
        </authorList>
    </citation>
    <scope>NUCLEOTIDE SEQUENCE [LARGE SCALE MRNA]</scope>
    <source>
        <tissue>Gastric mucosa</tissue>
    </source>
</reference>
<reference key="4">
    <citation type="journal article" date="2003" name="Nature">
        <title>The DNA sequence and analysis of human chromosome 6.</title>
        <authorList>
            <person name="Mungall A.J."/>
            <person name="Palmer S.A."/>
            <person name="Sims S.K."/>
            <person name="Edwards C.A."/>
            <person name="Ashurst J.L."/>
            <person name="Wilming L."/>
            <person name="Jones M.C."/>
            <person name="Horton R."/>
            <person name="Hunt S.E."/>
            <person name="Scott C.E."/>
            <person name="Gilbert J.G.R."/>
            <person name="Clamp M.E."/>
            <person name="Bethel G."/>
            <person name="Milne S."/>
            <person name="Ainscough R."/>
            <person name="Almeida J.P."/>
            <person name="Ambrose K.D."/>
            <person name="Andrews T.D."/>
            <person name="Ashwell R.I.S."/>
            <person name="Babbage A.K."/>
            <person name="Bagguley C.L."/>
            <person name="Bailey J."/>
            <person name="Banerjee R."/>
            <person name="Barker D.J."/>
            <person name="Barlow K.F."/>
            <person name="Bates K."/>
            <person name="Beare D.M."/>
            <person name="Beasley H."/>
            <person name="Beasley O."/>
            <person name="Bird C.P."/>
            <person name="Blakey S.E."/>
            <person name="Bray-Allen S."/>
            <person name="Brook J."/>
            <person name="Brown A.J."/>
            <person name="Brown J.Y."/>
            <person name="Burford D.C."/>
            <person name="Burrill W."/>
            <person name="Burton J."/>
            <person name="Carder C."/>
            <person name="Carter N.P."/>
            <person name="Chapman J.C."/>
            <person name="Clark S.Y."/>
            <person name="Clark G."/>
            <person name="Clee C.M."/>
            <person name="Clegg S."/>
            <person name="Cobley V."/>
            <person name="Collier R.E."/>
            <person name="Collins J.E."/>
            <person name="Colman L.K."/>
            <person name="Corby N.R."/>
            <person name="Coville G.J."/>
            <person name="Culley K.M."/>
            <person name="Dhami P."/>
            <person name="Davies J."/>
            <person name="Dunn M."/>
            <person name="Earthrowl M.E."/>
            <person name="Ellington A.E."/>
            <person name="Evans K.A."/>
            <person name="Faulkner L."/>
            <person name="Francis M.D."/>
            <person name="Frankish A."/>
            <person name="Frankland J."/>
            <person name="French L."/>
            <person name="Garner P."/>
            <person name="Garnett J."/>
            <person name="Ghori M.J."/>
            <person name="Gilby L.M."/>
            <person name="Gillson C.J."/>
            <person name="Glithero R.J."/>
            <person name="Grafham D.V."/>
            <person name="Grant M."/>
            <person name="Gribble S."/>
            <person name="Griffiths C."/>
            <person name="Griffiths M.N.D."/>
            <person name="Hall R."/>
            <person name="Halls K.S."/>
            <person name="Hammond S."/>
            <person name="Harley J.L."/>
            <person name="Hart E.A."/>
            <person name="Heath P.D."/>
            <person name="Heathcott R."/>
            <person name="Holmes S.J."/>
            <person name="Howden P.J."/>
            <person name="Howe K.L."/>
            <person name="Howell G.R."/>
            <person name="Huckle E."/>
            <person name="Humphray S.J."/>
            <person name="Humphries M.D."/>
            <person name="Hunt A.R."/>
            <person name="Johnson C.M."/>
            <person name="Joy A.A."/>
            <person name="Kay M."/>
            <person name="Keenan S.J."/>
            <person name="Kimberley A.M."/>
            <person name="King A."/>
            <person name="Laird G.K."/>
            <person name="Langford C."/>
            <person name="Lawlor S."/>
            <person name="Leongamornlert D.A."/>
            <person name="Leversha M."/>
            <person name="Lloyd C.R."/>
            <person name="Lloyd D.M."/>
            <person name="Loveland J.E."/>
            <person name="Lovell J."/>
            <person name="Martin S."/>
            <person name="Mashreghi-Mohammadi M."/>
            <person name="Maslen G.L."/>
            <person name="Matthews L."/>
            <person name="McCann O.T."/>
            <person name="McLaren S.J."/>
            <person name="McLay K."/>
            <person name="McMurray A."/>
            <person name="Moore M.J.F."/>
            <person name="Mullikin J.C."/>
            <person name="Niblett D."/>
            <person name="Nickerson T."/>
            <person name="Novik K.L."/>
            <person name="Oliver K."/>
            <person name="Overton-Larty E.K."/>
            <person name="Parker A."/>
            <person name="Patel R."/>
            <person name="Pearce A.V."/>
            <person name="Peck A.I."/>
            <person name="Phillimore B.J.C.T."/>
            <person name="Phillips S."/>
            <person name="Plumb R.W."/>
            <person name="Porter K.M."/>
            <person name="Ramsey Y."/>
            <person name="Ranby S.A."/>
            <person name="Rice C.M."/>
            <person name="Ross M.T."/>
            <person name="Searle S.M."/>
            <person name="Sehra H.K."/>
            <person name="Sheridan E."/>
            <person name="Skuce C.D."/>
            <person name="Smith S."/>
            <person name="Smith M."/>
            <person name="Spraggon L."/>
            <person name="Squares S.L."/>
            <person name="Steward C.A."/>
            <person name="Sycamore N."/>
            <person name="Tamlyn-Hall G."/>
            <person name="Tester J."/>
            <person name="Theaker A.J."/>
            <person name="Thomas D.W."/>
            <person name="Thorpe A."/>
            <person name="Tracey A."/>
            <person name="Tromans A."/>
            <person name="Tubby B."/>
            <person name="Wall M."/>
            <person name="Wallis J.M."/>
            <person name="West A.P."/>
            <person name="White S.S."/>
            <person name="Whitehead S.L."/>
            <person name="Whittaker H."/>
            <person name="Wild A."/>
            <person name="Willey D.J."/>
            <person name="Wilmer T.E."/>
            <person name="Wood J.M."/>
            <person name="Wray P.W."/>
            <person name="Wyatt J.C."/>
            <person name="Young L."/>
            <person name="Younger R.M."/>
            <person name="Bentley D.R."/>
            <person name="Coulson A."/>
            <person name="Durbin R.M."/>
            <person name="Hubbard T."/>
            <person name="Sulston J.E."/>
            <person name="Dunham I."/>
            <person name="Rogers J."/>
            <person name="Beck S."/>
        </authorList>
    </citation>
    <scope>NUCLEOTIDE SEQUENCE [LARGE SCALE GENOMIC DNA]</scope>
</reference>
<reference key="5">
    <citation type="submission" date="2005-09" db="EMBL/GenBank/DDBJ databases">
        <authorList>
            <person name="Mural R.J."/>
            <person name="Istrail S."/>
            <person name="Sutton G.G."/>
            <person name="Florea L."/>
            <person name="Halpern A.L."/>
            <person name="Mobarry C.M."/>
            <person name="Lippert R."/>
            <person name="Walenz B."/>
            <person name="Shatkay H."/>
            <person name="Dew I."/>
            <person name="Miller J.R."/>
            <person name="Flanigan M.J."/>
            <person name="Edwards N.J."/>
            <person name="Bolanos R."/>
            <person name="Fasulo D."/>
            <person name="Halldorsson B.V."/>
            <person name="Hannenhalli S."/>
            <person name="Turner R."/>
            <person name="Yooseph S."/>
            <person name="Lu F."/>
            <person name="Nusskern D.R."/>
            <person name="Shue B.C."/>
            <person name="Zheng X.H."/>
            <person name="Zhong F."/>
            <person name="Delcher A.L."/>
            <person name="Huson D.H."/>
            <person name="Kravitz S.A."/>
            <person name="Mouchard L."/>
            <person name="Reinert K."/>
            <person name="Remington K.A."/>
            <person name="Clark A.G."/>
            <person name="Waterman M.S."/>
            <person name="Eichler E.E."/>
            <person name="Adams M.D."/>
            <person name="Hunkapiller M.W."/>
            <person name="Myers E.W."/>
            <person name="Venter J.C."/>
        </authorList>
    </citation>
    <scope>NUCLEOTIDE SEQUENCE [LARGE SCALE GENOMIC DNA]</scope>
</reference>
<reference key="6">
    <citation type="journal article" date="2004" name="Genome Res.">
        <title>The status, quality, and expansion of the NIH full-length cDNA project: the Mammalian Gene Collection (MGC).</title>
        <authorList>
            <consortium name="The MGC Project Team"/>
        </authorList>
    </citation>
    <scope>NUCLEOTIDE SEQUENCE [LARGE SCALE MRNA]</scope>
    <source>
        <tissue>Skin</tissue>
    </source>
</reference>
<reference key="7">
    <citation type="journal article" date="2011" name="Sci. Signal.">
        <title>System-wide temporal characterization of the proteome and phosphoproteome of human embryonic stem cell differentiation.</title>
        <authorList>
            <person name="Rigbolt K.T."/>
            <person name="Prokhorova T.A."/>
            <person name="Akimov V."/>
            <person name="Henningsen J."/>
            <person name="Johansen P.T."/>
            <person name="Kratchmarova I."/>
            <person name="Kassem M."/>
            <person name="Mann M."/>
            <person name="Olsen J.V."/>
            <person name="Blagoev B."/>
        </authorList>
    </citation>
    <scope>ACETYLATION [LARGE SCALE ANALYSIS] AT ALA-2</scope>
    <scope>PHOSPHORYLATION [LARGE SCALE ANALYSIS] AT SER-9</scope>
    <scope>CLEAVAGE OF INITIATOR METHIONINE [LARGE SCALE ANALYSIS]</scope>
    <scope>IDENTIFICATION BY MASS SPECTROMETRY [LARGE SCALE ANALYSIS]</scope>
</reference>
<evidence type="ECO:0000256" key="1">
    <source>
        <dbReference type="SAM" id="MobiDB-lite"/>
    </source>
</evidence>
<evidence type="ECO:0000269" key="2">
    <source>
    </source>
</evidence>
<evidence type="ECO:0000305" key="3"/>
<evidence type="ECO:0007744" key="4">
    <source>
    </source>
</evidence>
<name>TF3C6_HUMAN</name>
<accession>Q969F1</accession>
<accession>Q5VXN2</accession>
<dbReference type="EMBL" id="EF137904">
    <property type="protein sequence ID" value="ABO33431.1"/>
    <property type="molecule type" value="mRNA"/>
</dbReference>
<dbReference type="EMBL" id="AF361492">
    <property type="protein sequence ID" value="AAL57217.1"/>
    <property type="molecule type" value="mRNA"/>
</dbReference>
<dbReference type="EMBL" id="AF361496">
    <property type="protein sequence ID" value="AAL57221.1"/>
    <property type="molecule type" value="mRNA"/>
</dbReference>
<dbReference type="EMBL" id="AK057977">
    <property type="protein sequence ID" value="BAB71624.1"/>
    <property type="molecule type" value="mRNA"/>
</dbReference>
<dbReference type="EMBL" id="AL357515">
    <property type="status" value="NOT_ANNOTATED_CDS"/>
    <property type="molecule type" value="Genomic_DNA"/>
</dbReference>
<dbReference type="EMBL" id="CH471051">
    <property type="protein sequence ID" value="EAW48305.1"/>
    <property type="molecule type" value="Genomic_DNA"/>
</dbReference>
<dbReference type="EMBL" id="BC011593">
    <property type="protein sequence ID" value="AAH11593.1"/>
    <property type="molecule type" value="mRNA"/>
</dbReference>
<dbReference type="CCDS" id="CCDS5087.1"/>
<dbReference type="RefSeq" id="NP_612417.1">
    <property type="nucleotide sequence ID" value="NM_138408.4"/>
</dbReference>
<dbReference type="PDB" id="8CLK">
    <property type="method" value="EM"/>
    <property type="resolution" value="3.50 A"/>
    <property type="chains" value="F=1-213"/>
</dbReference>
<dbReference type="PDBsum" id="8CLK"/>
<dbReference type="EMDB" id="EMD-16715"/>
<dbReference type="SMR" id="Q969F1"/>
<dbReference type="BioGRID" id="125192">
    <property type="interactions" value="29"/>
</dbReference>
<dbReference type="ComplexPortal" id="CPX-2373">
    <property type="entry name" value="General transcription factor TFIIIC complex"/>
</dbReference>
<dbReference type="FunCoup" id="Q969F1">
    <property type="interactions" value="654"/>
</dbReference>
<dbReference type="IntAct" id="Q969F1">
    <property type="interactions" value="15"/>
</dbReference>
<dbReference type="STRING" id="9606.ENSP00000357863"/>
<dbReference type="iPTMnet" id="Q969F1"/>
<dbReference type="PhosphoSitePlus" id="Q969F1"/>
<dbReference type="BioMuta" id="GTF3C6"/>
<dbReference type="DMDM" id="30580360"/>
<dbReference type="jPOST" id="Q969F1"/>
<dbReference type="MassIVE" id="Q969F1"/>
<dbReference type="PaxDb" id="9606-ENSP00000357863"/>
<dbReference type="PeptideAtlas" id="Q969F1"/>
<dbReference type="ProteomicsDB" id="75747"/>
<dbReference type="Pumba" id="Q969F1"/>
<dbReference type="Antibodypedia" id="54521">
    <property type="antibodies" value="45 antibodies from 13 providers"/>
</dbReference>
<dbReference type="DNASU" id="112495"/>
<dbReference type="Ensembl" id="ENST00000329970.8">
    <property type="protein sequence ID" value="ENSP00000357863.4"/>
    <property type="gene ID" value="ENSG00000155115.7"/>
</dbReference>
<dbReference type="GeneID" id="112495"/>
<dbReference type="KEGG" id="hsa:112495"/>
<dbReference type="MANE-Select" id="ENST00000329970.8">
    <property type="protein sequence ID" value="ENSP00000357863.4"/>
    <property type="RefSeq nucleotide sequence ID" value="NM_138408.4"/>
    <property type="RefSeq protein sequence ID" value="NP_612417.1"/>
</dbReference>
<dbReference type="UCSC" id="uc003pum.4">
    <property type="organism name" value="human"/>
</dbReference>
<dbReference type="AGR" id="HGNC:20872"/>
<dbReference type="CTD" id="112495"/>
<dbReference type="DisGeNET" id="112495"/>
<dbReference type="GeneCards" id="GTF3C6"/>
<dbReference type="HGNC" id="HGNC:20872">
    <property type="gene designation" value="GTF3C6"/>
</dbReference>
<dbReference type="HPA" id="ENSG00000155115">
    <property type="expression patterns" value="Low tissue specificity"/>
</dbReference>
<dbReference type="MIM" id="611784">
    <property type="type" value="gene"/>
</dbReference>
<dbReference type="neXtProt" id="NX_Q969F1"/>
<dbReference type="OpenTargets" id="ENSG00000155115"/>
<dbReference type="PharmGKB" id="PA162390481"/>
<dbReference type="VEuPathDB" id="HostDB:ENSG00000155115"/>
<dbReference type="eggNOG" id="ENOG502RYMW">
    <property type="taxonomic scope" value="Eukaryota"/>
</dbReference>
<dbReference type="GeneTree" id="ENSGT00390000000510"/>
<dbReference type="HOGENOM" id="CLU_106995_0_0_1"/>
<dbReference type="InParanoid" id="Q969F1"/>
<dbReference type="OMA" id="LNMICSF"/>
<dbReference type="OrthoDB" id="1877767at2759"/>
<dbReference type="PAN-GO" id="Q969F1">
    <property type="GO annotations" value="2 GO annotations based on evolutionary models"/>
</dbReference>
<dbReference type="PhylomeDB" id="Q969F1"/>
<dbReference type="TreeFam" id="TF329713"/>
<dbReference type="PathwayCommons" id="Q969F1"/>
<dbReference type="Reactome" id="R-HSA-749476">
    <property type="pathway name" value="RNA Polymerase III Abortive And Retractive Initiation"/>
</dbReference>
<dbReference type="Reactome" id="R-HSA-76061">
    <property type="pathway name" value="RNA Polymerase III Transcription Initiation From Type 1 Promoter"/>
</dbReference>
<dbReference type="Reactome" id="R-HSA-76066">
    <property type="pathway name" value="RNA Polymerase III Transcription Initiation From Type 2 Promoter"/>
</dbReference>
<dbReference type="SignaLink" id="Q969F1"/>
<dbReference type="SIGNOR" id="Q969F1"/>
<dbReference type="BioGRID-ORCS" id="112495">
    <property type="hits" value="377 hits in 1163 CRISPR screens"/>
</dbReference>
<dbReference type="ChiTaRS" id="GTF3C6">
    <property type="organism name" value="human"/>
</dbReference>
<dbReference type="GenomeRNAi" id="112495"/>
<dbReference type="Pharos" id="Q969F1">
    <property type="development level" value="Tdark"/>
</dbReference>
<dbReference type="PRO" id="PR:Q969F1"/>
<dbReference type="Proteomes" id="UP000005640">
    <property type="component" value="Chromosome 6"/>
</dbReference>
<dbReference type="RNAct" id="Q969F1">
    <property type="molecule type" value="protein"/>
</dbReference>
<dbReference type="Bgee" id="ENSG00000155115">
    <property type="expression patterns" value="Expressed in gastrocnemius and 101 other cell types or tissues"/>
</dbReference>
<dbReference type="GO" id="GO:0016604">
    <property type="term" value="C:nuclear body"/>
    <property type="evidence" value="ECO:0000314"/>
    <property type="project" value="HPA"/>
</dbReference>
<dbReference type="GO" id="GO:0005654">
    <property type="term" value="C:nucleoplasm"/>
    <property type="evidence" value="ECO:0000314"/>
    <property type="project" value="HPA"/>
</dbReference>
<dbReference type="GO" id="GO:0000127">
    <property type="term" value="C:transcription factor TFIIIC complex"/>
    <property type="evidence" value="ECO:0000314"/>
    <property type="project" value="HGNC-UCL"/>
</dbReference>
<dbReference type="GO" id="GO:0003677">
    <property type="term" value="F:DNA binding"/>
    <property type="evidence" value="ECO:0007669"/>
    <property type="project" value="UniProtKB-KW"/>
</dbReference>
<dbReference type="GO" id="GO:0000995">
    <property type="term" value="F:RNA polymerase III general transcription initiation factor activity"/>
    <property type="evidence" value="ECO:0000314"/>
    <property type="project" value="GO_Central"/>
</dbReference>
<dbReference type="GO" id="GO:0042791">
    <property type="term" value="P:5S class rRNA transcription by RNA polymerase III"/>
    <property type="evidence" value="ECO:0000305"/>
    <property type="project" value="HGNC-UCL"/>
</dbReference>
<dbReference type="GO" id="GO:0006383">
    <property type="term" value="P:transcription by RNA polymerase III"/>
    <property type="evidence" value="ECO:0000314"/>
    <property type="project" value="HGNC-UCL"/>
</dbReference>
<dbReference type="GO" id="GO:0042797">
    <property type="term" value="P:tRNA transcription by RNA polymerase III"/>
    <property type="evidence" value="ECO:0000305"/>
    <property type="project" value="HGNC-UCL"/>
</dbReference>
<dbReference type="FunFam" id="2.60.40.4370:FF:000001">
    <property type="entry name" value="general transcription factor 3C polypeptide 6"/>
    <property type="match status" value="1"/>
</dbReference>
<dbReference type="Gene3D" id="2.60.40.4370">
    <property type="match status" value="1"/>
</dbReference>
<dbReference type="InterPro" id="IPR042771">
    <property type="entry name" value="GTF3C6-like"/>
</dbReference>
<dbReference type="InterPro" id="IPR019481">
    <property type="entry name" value="TFIIIC_triple_barrel"/>
</dbReference>
<dbReference type="PANTHER" id="PTHR21860:SF2">
    <property type="entry name" value="GENERAL TRANSCRIPTION FACTOR 3C POLYPEPTIDE 6"/>
    <property type="match status" value="1"/>
</dbReference>
<dbReference type="PANTHER" id="PTHR21860">
    <property type="entry name" value="TRANSCRIPTION INITIATION FACTOR IIIC TFIIIC , POLYPEPTIDE 6-RELATED"/>
    <property type="match status" value="1"/>
</dbReference>
<dbReference type="Pfam" id="PF10419">
    <property type="entry name" value="TFIIIC_sub6"/>
    <property type="match status" value="1"/>
</dbReference>